<accession>B7MUN0</accession>
<protein>
    <recommendedName>
        <fullName evidence="1">Gamma-aminobutyraldehyde dehydrogenase</fullName>
        <shortName evidence="1">ABALDH</shortName>
        <ecNumber evidence="1">1.2.1.19</ecNumber>
    </recommendedName>
    <alternativeName>
        <fullName evidence="1">1-pyrroline dehydrogenase</fullName>
    </alternativeName>
    <alternativeName>
        <fullName evidence="1">4-aminobutanal dehydrogenase</fullName>
    </alternativeName>
    <alternativeName>
        <fullName evidence="1">5-aminopentanal dehydrogenase</fullName>
        <ecNumber evidence="1">1.2.1.-</ecNumber>
    </alternativeName>
</protein>
<keyword id="KW-0520">NAD</keyword>
<keyword id="KW-0560">Oxidoreductase</keyword>
<reference key="1">
    <citation type="journal article" date="2009" name="PLoS Genet.">
        <title>Organised genome dynamics in the Escherichia coli species results in highly diverse adaptive paths.</title>
        <authorList>
            <person name="Touchon M."/>
            <person name="Hoede C."/>
            <person name="Tenaillon O."/>
            <person name="Barbe V."/>
            <person name="Baeriswyl S."/>
            <person name="Bidet P."/>
            <person name="Bingen E."/>
            <person name="Bonacorsi S."/>
            <person name="Bouchier C."/>
            <person name="Bouvet O."/>
            <person name="Calteau A."/>
            <person name="Chiapello H."/>
            <person name="Clermont O."/>
            <person name="Cruveiller S."/>
            <person name="Danchin A."/>
            <person name="Diard M."/>
            <person name="Dossat C."/>
            <person name="Karoui M.E."/>
            <person name="Frapy E."/>
            <person name="Garry L."/>
            <person name="Ghigo J.M."/>
            <person name="Gilles A.M."/>
            <person name="Johnson J."/>
            <person name="Le Bouguenec C."/>
            <person name="Lescat M."/>
            <person name="Mangenot S."/>
            <person name="Martinez-Jehanne V."/>
            <person name="Matic I."/>
            <person name="Nassif X."/>
            <person name="Oztas S."/>
            <person name="Petit M.A."/>
            <person name="Pichon C."/>
            <person name="Rouy Z."/>
            <person name="Ruf C.S."/>
            <person name="Schneider D."/>
            <person name="Tourret J."/>
            <person name="Vacherie B."/>
            <person name="Vallenet D."/>
            <person name="Medigue C."/>
            <person name="Rocha E.P.C."/>
            <person name="Denamur E."/>
        </authorList>
    </citation>
    <scope>NUCLEOTIDE SEQUENCE [LARGE SCALE GENOMIC DNA]</scope>
    <source>
        <strain>ED1a</strain>
    </source>
</reference>
<evidence type="ECO:0000255" key="1">
    <source>
        <dbReference type="HAMAP-Rule" id="MF_01275"/>
    </source>
</evidence>
<name>ABDH_ECO81</name>
<organism>
    <name type="scientific">Escherichia coli O81 (strain ED1a)</name>
    <dbReference type="NCBI Taxonomy" id="585397"/>
    <lineage>
        <taxon>Bacteria</taxon>
        <taxon>Pseudomonadati</taxon>
        <taxon>Pseudomonadota</taxon>
        <taxon>Gammaproteobacteria</taxon>
        <taxon>Enterobacterales</taxon>
        <taxon>Enterobacteriaceae</taxon>
        <taxon>Escherichia</taxon>
    </lineage>
</organism>
<feature type="chain" id="PRO_1000165211" description="Gamma-aminobutyraldehyde dehydrogenase">
    <location>
        <begin position="1"/>
        <end position="474"/>
    </location>
</feature>
<feature type="active site" evidence="1">
    <location>
        <position position="246"/>
    </location>
</feature>
<feature type="active site" description="Nucleophile" evidence="1">
    <location>
        <position position="280"/>
    </location>
</feature>
<feature type="binding site" evidence="1">
    <location>
        <begin position="146"/>
        <end position="148"/>
    </location>
    <ligand>
        <name>NAD(+)</name>
        <dbReference type="ChEBI" id="CHEBI:57540"/>
    </ligand>
</feature>
<feature type="binding site" evidence="1">
    <location>
        <begin position="172"/>
        <end position="175"/>
    </location>
    <ligand>
        <name>NAD(+)</name>
        <dbReference type="ChEBI" id="CHEBI:57540"/>
    </ligand>
</feature>
<feature type="binding site" evidence="1">
    <location>
        <position position="209"/>
    </location>
    <ligand>
        <name>NAD(+)</name>
        <dbReference type="ChEBI" id="CHEBI:57540"/>
    </ligand>
</feature>
<feature type="binding site" evidence="1">
    <location>
        <begin position="225"/>
        <end position="228"/>
    </location>
    <ligand>
        <name>NAD(+)</name>
        <dbReference type="ChEBI" id="CHEBI:57540"/>
    </ligand>
</feature>
<feature type="binding site" evidence="1">
    <location>
        <position position="280"/>
    </location>
    <ligand>
        <name>NAD(+)</name>
        <dbReference type="ChEBI" id="CHEBI:57540"/>
    </ligand>
</feature>
<proteinExistence type="inferred from homology"/>
<comment type="function">
    <text evidence="1">Catalyzes the oxidation 4-aminobutanal (gamma-aminobutyraldehyde) to 4-aminobutanoate (gamma-aminobutyrate or GABA). This is the second step in one of two pathways for putrescine degradation, where putrescine is converted into 4-aminobutanoate via 4-aminobutanal. Also functions as a 5-aminopentanal dehydrogenase in a a L-lysine degradation pathway to succinate that proceeds via cadaverine, glutarate and L-2-hydroxyglutarate.</text>
</comment>
<comment type="catalytic activity">
    <reaction evidence="1">
        <text>4-aminobutanal + NAD(+) + H2O = 4-aminobutanoate + NADH + 2 H(+)</text>
        <dbReference type="Rhea" id="RHEA:19105"/>
        <dbReference type="ChEBI" id="CHEBI:15377"/>
        <dbReference type="ChEBI" id="CHEBI:15378"/>
        <dbReference type="ChEBI" id="CHEBI:57540"/>
        <dbReference type="ChEBI" id="CHEBI:57945"/>
        <dbReference type="ChEBI" id="CHEBI:58264"/>
        <dbReference type="ChEBI" id="CHEBI:59888"/>
        <dbReference type="EC" id="1.2.1.19"/>
    </reaction>
    <physiologicalReaction direction="left-to-right" evidence="1">
        <dbReference type="Rhea" id="RHEA:19106"/>
    </physiologicalReaction>
</comment>
<comment type="catalytic activity">
    <reaction evidence="1">
        <text>5-aminopentanal + NAD(+) + H2O = 5-aminopentanoate + NADH + 2 H(+)</text>
        <dbReference type="Rhea" id="RHEA:61632"/>
        <dbReference type="ChEBI" id="CHEBI:15377"/>
        <dbReference type="ChEBI" id="CHEBI:15378"/>
        <dbReference type="ChEBI" id="CHEBI:57540"/>
        <dbReference type="ChEBI" id="CHEBI:57945"/>
        <dbReference type="ChEBI" id="CHEBI:144896"/>
        <dbReference type="ChEBI" id="CHEBI:356010"/>
    </reaction>
    <physiologicalReaction direction="left-to-right" evidence="1">
        <dbReference type="Rhea" id="RHEA:61633"/>
    </physiologicalReaction>
</comment>
<comment type="pathway">
    <text evidence="1">Amine and polyamine degradation; putrescine degradation; 4-aminobutanoate from 4-aminobutanal: step 1/1.</text>
</comment>
<comment type="pathway">
    <text evidence="1">Amino-acid degradation.</text>
</comment>
<comment type="subunit">
    <text evidence="1">Homotetramer.</text>
</comment>
<comment type="miscellaneous">
    <text evidence="1">4-aminobutanal can spontaneously cyclize to 1-pyrroline, and 5-aminopentanal to 1-piperideine.</text>
</comment>
<comment type="similarity">
    <text evidence="1">Belongs to the aldehyde dehydrogenase family. Gamma-aminobutyraldehyde dehydrogenase subfamily.</text>
</comment>
<dbReference type="EC" id="1.2.1.19" evidence="1"/>
<dbReference type="EC" id="1.2.1.-" evidence="1"/>
<dbReference type="EMBL" id="CU928162">
    <property type="protein sequence ID" value="CAR07796.2"/>
    <property type="molecule type" value="Genomic_DNA"/>
</dbReference>
<dbReference type="RefSeq" id="WP_001163909.1">
    <property type="nucleotide sequence ID" value="NC_011745.1"/>
</dbReference>
<dbReference type="SMR" id="B7MUN0"/>
<dbReference type="KEGG" id="ecq:ECED1_1598"/>
<dbReference type="HOGENOM" id="CLU_005391_1_0_6"/>
<dbReference type="UniPathway" id="UPA00188">
    <property type="reaction ID" value="UER00292"/>
</dbReference>
<dbReference type="Proteomes" id="UP000000748">
    <property type="component" value="Chromosome"/>
</dbReference>
<dbReference type="GO" id="GO:0019145">
    <property type="term" value="F:aminobutyraldehyde dehydrogenase (NAD+) activity"/>
    <property type="evidence" value="ECO:0007669"/>
    <property type="project" value="UniProtKB-UniRule"/>
</dbReference>
<dbReference type="GO" id="GO:0051287">
    <property type="term" value="F:NAD binding"/>
    <property type="evidence" value="ECO:0007669"/>
    <property type="project" value="UniProtKB-UniRule"/>
</dbReference>
<dbReference type="GO" id="GO:0019477">
    <property type="term" value="P:L-lysine catabolic process"/>
    <property type="evidence" value="ECO:0007669"/>
    <property type="project" value="UniProtKB-UniRule"/>
</dbReference>
<dbReference type="GO" id="GO:0009447">
    <property type="term" value="P:putrescine catabolic process"/>
    <property type="evidence" value="ECO:0007669"/>
    <property type="project" value="UniProtKB-UniRule"/>
</dbReference>
<dbReference type="CDD" id="cd07092">
    <property type="entry name" value="ALDH_ABALDH-YdcW"/>
    <property type="match status" value="1"/>
</dbReference>
<dbReference type="FunFam" id="3.40.605.10:FF:000001">
    <property type="entry name" value="Aldehyde dehydrogenase 1"/>
    <property type="match status" value="1"/>
</dbReference>
<dbReference type="FunFam" id="3.40.309.10:FF:000010">
    <property type="entry name" value="Gamma-aminobutyraldehyde dehydrogenase"/>
    <property type="match status" value="1"/>
</dbReference>
<dbReference type="Gene3D" id="3.40.605.10">
    <property type="entry name" value="Aldehyde Dehydrogenase, Chain A, domain 1"/>
    <property type="match status" value="1"/>
</dbReference>
<dbReference type="Gene3D" id="3.40.309.10">
    <property type="entry name" value="Aldehyde Dehydrogenase, Chain A, domain 2"/>
    <property type="match status" value="1"/>
</dbReference>
<dbReference type="HAMAP" id="MF_01275">
    <property type="entry name" value="Aldedh_Prr"/>
    <property type="match status" value="1"/>
</dbReference>
<dbReference type="InterPro" id="IPR016161">
    <property type="entry name" value="Ald_DH/histidinol_DH"/>
</dbReference>
<dbReference type="InterPro" id="IPR016163">
    <property type="entry name" value="Ald_DH_C"/>
</dbReference>
<dbReference type="InterPro" id="IPR029510">
    <property type="entry name" value="Ald_DH_CS_GLU"/>
</dbReference>
<dbReference type="InterPro" id="IPR016162">
    <property type="entry name" value="Ald_DH_N"/>
</dbReference>
<dbReference type="InterPro" id="IPR015590">
    <property type="entry name" value="Aldehyde_DH_dom"/>
</dbReference>
<dbReference type="InterPro" id="IPR015657">
    <property type="entry name" value="Aminobutyraldehyde_DH"/>
</dbReference>
<dbReference type="InterPro" id="IPR017749">
    <property type="entry name" value="PatD"/>
</dbReference>
<dbReference type="NCBIfam" id="TIGR03374">
    <property type="entry name" value="ABALDH"/>
    <property type="match status" value="1"/>
</dbReference>
<dbReference type="NCBIfam" id="NF010000">
    <property type="entry name" value="PRK13473.1"/>
    <property type="match status" value="1"/>
</dbReference>
<dbReference type="PANTHER" id="PTHR11699">
    <property type="entry name" value="ALDEHYDE DEHYDROGENASE-RELATED"/>
    <property type="match status" value="1"/>
</dbReference>
<dbReference type="Pfam" id="PF00171">
    <property type="entry name" value="Aldedh"/>
    <property type="match status" value="1"/>
</dbReference>
<dbReference type="SUPFAM" id="SSF53720">
    <property type="entry name" value="ALDH-like"/>
    <property type="match status" value="1"/>
</dbReference>
<dbReference type="PROSITE" id="PS00687">
    <property type="entry name" value="ALDEHYDE_DEHYDR_GLU"/>
    <property type="match status" value="1"/>
</dbReference>
<sequence length="474" mass="50859">MQHKLLINGELVSGEGEKQPVYNPATGDVLLEIAEASAEQVNAAVRAADAAFAEWGQTTPKARAECLLKLADVIEENGQVFAELESRNCGKPLHSAFNDEIPAIVDVFRFFAGAARCLNGLAAGEYLEGHTSMIRRDPLGVVASIAPWNYPLMMAAWKLAPALAAGNCVVLKPSEITPLTALKLAELAKDIFPAGVINVLFGRGKTVGDPLTGHPKVRMVSLTGSIATGEHIISHTAPSIKRTHMELGGKAPVIVFDDADIEAVVEGVRTFGYYNAGQDCTAACRIYAQKGIYDTLVEKLGAAVATLKSGSPDDESTELGPLSSLAHLERVSKAVEEAKATGHIKVITGGEKRKGNGYYYAPTLLAGALQDDAIVQKEVFGPVVSVTLFDNEEQVVNWANDSQYGLASSVWTKDVGRAHRVSARLQYGCTWVNTHFMLVSEMPHGGQKLSGYGKDMSLYGLEDYTVVRHVMVKH</sequence>
<gene>
    <name evidence="1" type="primary">patD</name>
    <name type="ordered locus">ECED1_1598</name>
</gene>